<keyword id="KW-0325">Glycoprotein</keyword>
<keyword id="KW-1185">Reference proteome</keyword>
<keyword id="KW-0964">Secreted</keyword>
<keyword id="KW-0732">Signal</keyword>
<feature type="signal peptide" evidence="1">
    <location>
        <begin position="1"/>
        <end position="18"/>
    </location>
</feature>
<feature type="chain" id="PRO_0000392665" description="Uncharacterized protein DDB_G0292248">
    <location>
        <begin position="19"/>
        <end position="314"/>
    </location>
</feature>
<feature type="region of interest" description="Disordered" evidence="2">
    <location>
        <begin position="252"/>
        <end position="314"/>
    </location>
</feature>
<feature type="compositionally biased region" description="Low complexity" evidence="2">
    <location>
        <begin position="257"/>
        <end position="268"/>
    </location>
</feature>
<feature type="compositionally biased region" description="Low complexity" evidence="2">
    <location>
        <begin position="285"/>
        <end position="296"/>
    </location>
</feature>
<feature type="glycosylation site" description="N-linked (GlcNAc...) asparagine" evidence="1">
    <location>
        <position position="43"/>
    </location>
</feature>
<feature type="glycosylation site" description="N-linked (GlcNAc...) asparagine" evidence="1">
    <location>
        <position position="96"/>
    </location>
</feature>
<feature type="glycosylation site" description="N-linked (GlcNAc...) asparagine" evidence="1">
    <location>
        <position position="109"/>
    </location>
</feature>
<feature type="glycosylation site" description="N-linked (GlcNAc...) asparagine" evidence="1">
    <location>
        <position position="116"/>
    </location>
</feature>
<feature type="glycosylation site" description="N-linked (GlcNAc...) asparagine" evidence="1">
    <location>
        <position position="117"/>
    </location>
</feature>
<feature type="glycosylation site" description="N-linked (GlcNAc...) asparagine" evidence="1">
    <location>
        <position position="161"/>
    </location>
</feature>
<sequence length="314" mass="36263">MKVSLLIFLIILVGVIKSFDINSIDDSHWESDEGFEHHKCWKNLTGYYTEFALSAYNTMFPTPYGVIPVSFYEGGVVTADIKGQQMYVHYGIVAKNFTTWGQYYAYGKNQTQYVVNNSSCVAMKLQFPFPDKLPKFKKVGTTKIGQTDVDVWIVKGKQQCNVTRSCILIQKDTCTLMSANFGNKDKSNLGFSLLNYYRYENKPHYDKFQLPSQCWDVKPKDENENKEEQGLFANEEELENKEYFGDNQQAPSMRITKNNPHLNNNNNNKKYHHREHETPNPDLIKTTTKTSTKTTSFSRATNDSPKSIDFHHLF</sequence>
<accession>Q54DH5</accession>
<organism>
    <name type="scientific">Dictyostelium discoideum</name>
    <name type="common">Social amoeba</name>
    <dbReference type="NCBI Taxonomy" id="44689"/>
    <lineage>
        <taxon>Eukaryota</taxon>
        <taxon>Amoebozoa</taxon>
        <taxon>Evosea</taxon>
        <taxon>Eumycetozoa</taxon>
        <taxon>Dictyostelia</taxon>
        <taxon>Dictyosteliales</taxon>
        <taxon>Dictyosteliaceae</taxon>
        <taxon>Dictyostelium</taxon>
    </lineage>
</organism>
<proteinExistence type="evidence at transcript level"/>
<evidence type="ECO:0000255" key="1"/>
<evidence type="ECO:0000256" key="2">
    <source>
        <dbReference type="SAM" id="MobiDB-lite"/>
    </source>
</evidence>
<evidence type="ECO:0000269" key="3">
    <source>
    </source>
</evidence>
<evidence type="ECO:0000305" key="4"/>
<name>Y2248_DICDI</name>
<gene>
    <name type="ORF">DDB_G0292248</name>
</gene>
<protein>
    <recommendedName>
        <fullName>Uncharacterized protein DDB_G0292248</fullName>
    </recommendedName>
</protein>
<dbReference type="EMBL" id="AAFI02000188">
    <property type="protein sequence ID" value="EAL61334.1"/>
    <property type="molecule type" value="Genomic_DNA"/>
</dbReference>
<dbReference type="RefSeq" id="XP_629752.1">
    <property type="nucleotide sequence ID" value="XM_629750.1"/>
</dbReference>
<dbReference type="FunCoup" id="Q54DH5">
    <property type="interactions" value="744"/>
</dbReference>
<dbReference type="GlyGen" id="Q54DH5">
    <property type="glycosylation" value="6 sites"/>
</dbReference>
<dbReference type="PaxDb" id="44689-DDB0229935"/>
<dbReference type="EnsemblProtists" id="EAL61334">
    <property type="protein sequence ID" value="EAL61334"/>
    <property type="gene ID" value="DDB_G0292248"/>
</dbReference>
<dbReference type="GeneID" id="8628581"/>
<dbReference type="KEGG" id="ddi:DDB_G0292248"/>
<dbReference type="dictyBase" id="DDB_G0292248"/>
<dbReference type="VEuPathDB" id="AmoebaDB:DDB_G0292248"/>
<dbReference type="eggNOG" id="ENOG502RHFE">
    <property type="taxonomic scope" value="Eukaryota"/>
</dbReference>
<dbReference type="HOGENOM" id="CLU_077028_0_0_1"/>
<dbReference type="InParanoid" id="Q54DH5"/>
<dbReference type="OMA" id="HREHETP"/>
<dbReference type="PhylomeDB" id="Q54DH5"/>
<dbReference type="PRO" id="PR:Q54DH5"/>
<dbReference type="Proteomes" id="UP000002195">
    <property type="component" value="Chromosome 6"/>
</dbReference>
<dbReference type="GO" id="GO:0005576">
    <property type="term" value="C:extracellular region"/>
    <property type="evidence" value="ECO:0007669"/>
    <property type="project" value="UniProtKB-SubCell"/>
</dbReference>
<dbReference type="InterPro" id="IPR040310">
    <property type="entry name" value="DDB_G0292248-like"/>
</dbReference>
<dbReference type="PANTHER" id="PTHR31648:SF4">
    <property type="entry name" value="CARBOHYDRATE BINDING DOMAIN-CONTAINING PROTEIN"/>
    <property type="match status" value="1"/>
</dbReference>
<dbReference type="PANTHER" id="PTHR31648">
    <property type="entry name" value="TRANSMEMBRANE PROTEIN-RELATED"/>
    <property type="match status" value="1"/>
</dbReference>
<reference key="1">
    <citation type="journal article" date="2005" name="Nature">
        <title>The genome of the social amoeba Dictyostelium discoideum.</title>
        <authorList>
            <person name="Eichinger L."/>
            <person name="Pachebat J.A."/>
            <person name="Gloeckner G."/>
            <person name="Rajandream M.A."/>
            <person name="Sucgang R."/>
            <person name="Berriman M."/>
            <person name="Song J."/>
            <person name="Olsen R."/>
            <person name="Szafranski K."/>
            <person name="Xu Q."/>
            <person name="Tunggal B."/>
            <person name="Kummerfeld S."/>
            <person name="Madera M."/>
            <person name="Konfortov B.A."/>
            <person name="Rivero F."/>
            <person name="Bankier A.T."/>
            <person name="Lehmann R."/>
            <person name="Hamlin N."/>
            <person name="Davies R."/>
            <person name="Gaudet P."/>
            <person name="Fey P."/>
            <person name="Pilcher K."/>
            <person name="Chen G."/>
            <person name="Saunders D."/>
            <person name="Sodergren E.J."/>
            <person name="Davis P."/>
            <person name="Kerhornou A."/>
            <person name="Nie X."/>
            <person name="Hall N."/>
            <person name="Anjard C."/>
            <person name="Hemphill L."/>
            <person name="Bason N."/>
            <person name="Farbrother P."/>
            <person name="Desany B."/>
            <person name="Just E."/>
            <person name="Morio T."/>
            <person name="Rost R."/>
            <person name="Churcher C.M."/>
            <person name="Cooper J."/>
            <person name="Haydock S."/>
            <person name="van Driessche N."/>
            <person name="Cronin A."/>
            <person name="Goodhead I."/>
            <person name="Muzny D.M."/>
            <person name="Mourier T."/>
            <person name="Pain A."/>
            <person name="Lu M."/>
            <person name="Harper D."/>
            <person name="Lindsay R."/>
            <person name="Hauser H."/>
            <person name="James K.D."/>
            <person name="Quiles M."/>
            <person name="Madan Babu M."/>
            <person name="Saito T."/>
            <person name="Buchrieser C."/>
            <person name="Wardroper A."/>
            <person name="Felder M."/>
            <person name="Thangavelu M."/>
            <person name="Johnson D."/>
            <person name="Knights A."/>
            <person name="Loulseged H."/>
            <person name="Mungall K.L."/>
            <person name="Oliver K."/>
            <person name="Price C."/>
            <person name="Quail M.A."/>
            <person name="Urushihara H."/>
            <person name="Hernandez J."/>
            <person name="Rabbinowitsch E."/>
            <person name="Steffen D."/>
            <person name="Sanders M."/>
            <person name="Ma J."/>
            <person name="Kohara Y."/>
            <person name="Sharp S."/>
            <person name="Simmonds M.N."/>
            <person name="Spiegler S."/>
            <person name="Tivey A."/>
            <person name="Sugano S."/>
            <person name="White B."/>
            <person name="Walker D."/>
            <person name="Woodward J.R."/>
            <person name="Winckler T."/>
            <person name="Tanaka Y."/>
            <person name="Shaulsky G."/>
            <person name="Schleicher M."/>
            <person name="Weinstock G.M."/>
            <person name="Rosenthal A."/>
            <person name="Cox E.C."/>
            <person name="Chisholm R.L."/>
            <person name="Gibbs R.A."/>
            <person name="Loomis W.F."/>
            <person name="Platzer M."/>
            <person name="Kay R.R."/>
            <person name="Williams J.G."/>
            <person name="Dear P.H."/>
            <person name="Noegel A.A."/>
            <person name="Barrell B.G."/>
            <person name="Kuspa A."/>
        </authorList>
    </citation>
    <scope>NUCLEOTIDE SEQUENCE [LARGE SCALE GENOMIC DNA]</scope>
    <source>
        <strain>AX4</strain>
    </source>
</reference>
<reference key="2">
    <citation type="journal article" date="2003" name="Eukaryot. Cell">
        <title>Changing patterns of gene expression in Dictyostelium prestalk cell subtypes recognized by in situ hybridization with genes from microarray analyses.</title>
        <authorList>
            <person name="Maeda M."/>
            <person name="Sakamoto H."/>
            <person name="Iranfar N."/>
            <person name="Fuller D."/>
            <person name="Maruo T."/>
            <person name="Ogihara S."/>
            <person name="Morio T."/>
            <person name="Urushihara H."/>
            <person name="Tanaka Y."/>
            <person name="Loomis W.F."/>
        </authorList>
    </citation>
    <scope>DEVELOPMENTAL STAGE [LARGE SCALE ANALYSIS]</scope>
</reference>
<reference key="3">
    <citation type="journal article" date="2004" name="Int. J. Dev. Biol.">
        <title>Identification of new modes of Dd-STATa regulation of gene expression in Dictyostelium by in situ hybridisation.</title>
        <authorList>
            <person name="Shimada N."/>
            <person name="Maeda M."/>
            <person name="Urushihara H."/>
            <person name="Kawata T."/>
        </authorList>
    </citation>
    <scope>IDENTIFICATION</scope>
</reference>
<comment type="subcellular location">
    <subcellularLocation>
        <location evidence="4">Secreted</location>
    </subcellularLocation>
</comment>
<comment type="developmental stage">
    <text evidence="3">Expressed in prestalk pstA and pstO cells in the slug stage. Preferentially restricted to pstO cells during culmination.</text>
</comment>